<organism>
    <name type="scientific">Macaca mulatta</name>
    <name type="common">Rhesus macaque</name>
    <dbReference type="NCBI Taxonomy" id="9544"/>
    <lineage>
        <taxon>Eukaryota</taxon>
        <taxon>Metazoa</taxon>
        <taxon>Chordata</taxon>
        <taxon>Craniata</taxon>
        <taxon>Vertebrata</taxon>
        <taxon>Euteleostomi</taxon>
        <taxon>Mammalia</taxon>
        <taxon>Eutheria</taxon>
        <taxon>Euarchontoglires</taxon>
        <taxon>Primates</taxon>
        <taxon>Haplorrhini</taxon>
        <taxon>Catarrhini</taxon>
        <taxon>Cercopithecidae</taxon>
        <taxon>Cercopithecinae</taxon>
        <taxon>Macaca</taxon>
    </lineage>
</organism>
<dbReference type="EMBL" id="U63592">
    <property type="protein sequence ID" value="AAB53939.1"/>
    <property type="molecule type" value="Genomic_DNA"/>
</dbReference>
<dbReference type="EMBL" id="U63591">
    <property type="protein sequence ID" value="AAB53939.1"/>
    <property type="status" value="JOINED"/>
    <property type="molecule type" value="Genomic_DNA"/>
</dbReference>
<dbReference type="EMBL" id="AF200596">
    <property type="protein sequence ID" value="AAF08306.1"/>
    <property type="molecule type" value="mRNA"/>
</dbReference>
<dbReference type="PIR" id="G02953">
    <property type="entry name" value="G02953"/>
</dbReference>
<dbReference type="RefSeq" id="NP_001038195.1">
    <property type="nucleotide sequence ID" value="NM_001044730.2"/>
</dbReference>
<dbReference type="SMR" id="Q28524"/>
<dbReference type="FunCoup" id="Q28524">
    <property type="interactions" value="705"/>
</dbReference>
<dbReference type="STRING" id="9544.ENSMMUP00000032146"/>
<dbReference type="BindingDB" id="Q28524"/>
<dbReference type="ChEMBL" id="CHEMBL3124732"/>
<dbReference type="DrugCentral" id="Q28524"/>
<dbReference type="GlyCosmos" id="Q28524">
    <property type="glycosylation" value="2 sites, No reported glycans"/>
</dbReference>
<dbReference type="PaxDb" id="9544-ENSMMUP00000032146"/>
<dbReference type="GeneID" id="699129"/>
<dbReference type="KEGG" id="mcc:699129"/>
<dbReference type="CTD" id="155"/>
<dbReference type="eggNOG" id="KOG3656">
    <property type="taxonomic scope" value="Eukaryota"/>
</dbReference>
<dbReference type="InParanoid" id="Q28524"/>
<dbReference type="OrthoDB" id="5983033at2759"/>
<dbReference type="TreeFam" id="TF316350"/>
<dbReference type="Proteomes" id="UP000006718">
    <property type="component" value="Unassembled WGS sequence"/>
</dbReference>
<dbReference type="GO" id="GO:0005886">
    <property type="term" value="C:plasma membrane"/>
    <property type="evidence" value="ECO:0000318"/>
    <property type="project" value="GO_Central"/>
</dbReference>
<dbReference type="GO" id="GO:0043235">
    <property type="term" value="C:receptor complex"/>
    <property type="evidence" value="ECO:0000250"/>
    <property type="project" value="HGNC-UCL"/>
</dbReference>
<dbReference type="GO" id="GO:0004939">
    <property type="term" value="F:beta-adrenergic receptor activity"/>
    <property type="evidence" value="ECO:0000250"/>
    <property type="project" value="HGNC-UCL"/>
</dbReference>
<dbReference type="GO" id="GO:0015052">
    <property type="term" value="F:beta3-adrenergic receptor activity"/>
    <property type="evidence" value="ECO:0000250"/>
    <property type="project" value="HGNC-UCL"/>
</dbReference>
<dbReference type="GO" id="GO:0051379">
    <property type="term" value="F:epinephrine binding"/>
    <property type="evidence" value="ECO:0000318"/>
    <property type="project" value="GO_Central"/>
</dbReference>
<dbReference type="GO" id="GO:0042803">
    <property type="term" value="F:protein homodimerization activity"/>
    <property type="evidence" value="ECO:0000250"/>
    <property type="project" value="HGNC-UCL"/>
</dbReference>
<dbReference type="GO" id="GO:0071880">
    <property type="term" value="P:adenylate cyclase-activating adrenergic receptor signaling pathway"/>
    <property type="evidence" value="ECO:0000250"/>
    <property type="project" value="HGNC-UCL"/>
</dbReference>
<dbReference type="GO" id="GO:0002025">
    <property type="term" value="P:norepinephrine-epinephrine-mediated vasodilation involved in regulation of systemic arterial blood pressure"/>
    <property type="evidence" value="ECO:0000318"/>
    <property type="project" value="GO_Central"/>
</dbReference>
<dbReference type="GO" id="GO:0043410">
    <property type="term" value="P:positive regulation of MAPK cascade"/>
    <property type="evidence" value="ECO:0000250"/>
    <property type="project" value="HGNC-UCL"/>
</dbReference>
<dbReference type="CDD" id="cd15959">
    <property type="entry name" value="7tmA_Beta3_AR"/>
    <property type="match status" value="1"/>
</dbReference>
<dbReference type="Gene3D" id="1.20.1070.10">
    <property type="entry name" value="Rhodopsin 7-helix transmembrane proteins"/>
    <property type="match status" value="1"/>
</dbReference>
<dbReference type="InterPro" id="IPR002233">
    <property type="entry name" value="ADR_fam"/>
</dbReference>
<dbReference type="InterPro" id="IPR000681">
    <property type="entry name" value="ADRB3_rcpt"/>
</dbReference>
<dbReference type="InterPro" id="IPR000276">
    <property type="entry name" value="GPCR_Rhodpsn"/>
</dbReference>
<dbReference type="InterPro" id="IPR017452">
    <property type="entry name" value="GPCR_Rhodpsn_7TM"/>
</dbReference>
<dbReference type="PANTHER" id="PTHR24248">
    <property type="entry name" value="ADRENERGIC RECEPTOR-RELATED G-PROTEIN COUPLED RECEPTOR"/>
    <property type="match status" value="1"/>
</dbReference>
<dbReference type="PANTHER" id="PTHR24248:SF3">
    <property type="entry name" value="BETA-3 ADRENERGIC RECEPTOR"/>
    <property type="match status" value="1"/>
</dbReference>
<dbReference type="Pfam" id="PF00001">
    <property type="entry name" value="7tm_1"/>
    <property type="match status" value="1"/>
</dbReference>
<dbReference type="PRINTS" id="PR01103">
    <property type="entry name" value="ADRENERGICR"/>
</dbReference>
<dbReference type="PRINTS" id="PR00563">
    <property type="entry name" value="ADRENRGCB3AR"/>
</dbReference>
<dbReference type="PRINTS" id="PR00237">
    <property type="entry name" value="GPCRRHODOPSN"/>
</dbReference>
<dbReference type="SMART" id="SM01381">
    <property type="entry name" value="7TM_GPCR_Srsx"/>
    <property type="match status" value="1"/>
</dbReference>
<dbReference type="SUPFAM" id="SSF81321">
    <property type="entry name" value="Family A G protein-coupled receptor-like"/>
    <property type="match status" value="1"/>
</dbReference>
<dbReference type="PROSITE" id="PS00237">
    <property type="entry name" value="G_PROTEIN_RECEP_F1_1"/>
    <property type="match status" value="1"/>
</dbReference>
<dbReference type="PROSITE" id="PS50262">
    <property type="entry name" value="G_PROTEIN_RECEP_F1_2"/>
    <property type="match status" value="1"/>
</dbReference>
<gene>
    <name type="primary">ADRB3</name>
    <name type="synonym">B3AR</name>
</gene>
<protein>
    <recommendedName>
        <fullName>Beta-3 adrenergic receptor</fullName>
    </recommendedName>
    <alternativeName>
        <fullName>Beta-3 adrenoreceptor</fullName>
        <shortName>Beta-3 adrenoceptor</shortName>
    </alternativeName>
</protein>
<feature type="chain" id="PRO_0000069144" description="Beta-3 adrenergic receptor">
    <location>
        <begin position="1"/>
        <end position="418"/>
    </location>
</feature>
<feature type="topological domain" description="Extracellular" evidence="1">
    <location>
        <begin position="1"/>
        <end position="36"/>
    </location>
</feature>
<feature type="transmembrane region" description="Helical; Name=1" evidence="1">
    <location>
        <begin position="37"/>
        <end position="63"/>
    </location>
</feature>
<feature type="topological domain" description="Cytoplasmic" evidence="1">
    <location>
        <begin position="64"/>
        <end position="72"/>
    </location>
</feature>
<feature type="transmembrane region" description="Helical; Name=2" evidence="1">
    <location>
        <begin position="73"/>
        <end position="91"/>
    </location>
</feature>
<feature type="topological domain" description="Extracellular" evidence="1">
    <location>
        <begin position="92"/>
        <end position="111"/>
    </location>
</feature>
<feature type="transmembrane region" description="Helical; Name=3" evidence="1">
    <location>
        <begin position="112"/>
        <end position="133"/>
    </location>
</feature>
<feature type="topological domain" description="Cytoplasmic" evidence="1">
    <location>
        <begin position="134"/>
        <end position="155"/>
    </location>
</feature>
<feature type="transmembrane region" description="Helical; Name=4" evidence="1">
    <location>
        <begin position="156"/>
        <end position="178"/>
    </location>
</feature>
<feature type="topological domain" description="Extracellular" evidence="1">
    <location>
        <begin position="179"/>
        <end position="203"/>
    </location>
</feature>
<feature type="transmembrane region" description="Helical; Name=5" evidence="1">
    <location>
        <begin position="204"/>
        <end position="225"/>
    </location>
</feature>
<feature type="topological domain" description="Cytoplasmic" evidence="1">
    <location>
        <begin position="226"/>
        <end position="292"/>
    </location>
</feature>
<feature type="transmembrane region" description="Helical; Name=6" evidence="1">
    <location>
        <begin position="293"/>
        <end position="314"/>
    </location>
</feature>
<feature type="topological domain" description="Extracellular" evidence="1">
    <location>
        <begin position="315"/>
        <end position="326"/>
    </location>
</feature>
<feature type="transmembrane region" description="Helical; Name=7" evidence="1">
    <location>
        <begin position="327"/>
        <end position="347"/>
    </location>
</feature>
<feature type="topological domain" description="Cytoplasmic" evidence="1">
    <location>
        <begin position="348"/>
        <end position="418"/>
    </location>
</feature>
<feature type="region of interest" description="Disordered" evidence="5">
    <location>
        <begin position="372"/>
        <end position="418"/>
    </location>
</feature>
<feature type="compositionally biased region" description="Low complexity" evidence="5">
    <location>
        <begin position="374"/>
        <end position="383"/>
    </location>
</feature>
<feature type="compositionally biased region" description="Basic and acidic residues" evidence="5">
    <location>
        <begin position="408"/>
        <end position="418"/>
    </location>
</feature>
<feature type="lipid moiety-binding region" description="S-palmitoyl cysteine" evidence="1">
    <location>
        <position position="361"/>
    </location>
</feature>
<feature type="glycosylation site" description="N-linked (GlcNAc...) asparagine" evidence="3">
    <location>
        <position position="8"/>
    </location>
</feature>
<feature type="glycosylation site" description="N-linked (GlcNAc...) asparagine" evidence="3">
    <location>
        <position position="26"/>
    </location>
</feature>
<feature type="disulfide bond" evidence="4">
    <location>
        <begin position="110"/>
        <end position="196"/>
    </location>
</feature>
<feature type="disulfide bond" evidence="4">
    <location>
        <begin position="189"/>
        <end position="195"/>
    </location>
</feature>
<comment type="function">
    <text>Beta-adrenergic receptors mediate the catecholamine-induced activation of adenylate cyclase through the action of G proteins. Beta-3 is involved in the regulation of lipolysis and thermogenesis.</text>
</comment>
<comment type="subunit">
    <text evidence="2">Interacts with ARRDC3.</text>
</comment>
<comment type="subcellular location">
    <subcellularLocation>
        <location>Cell membrane</location>
        <topology>Multi-pass membrane protein</topology>
    </subcellularLocation>
</comment>
<comment type="similarity">
    <text evidence="4">Belongs to the G-protein coupled receptor 1 family. Adrenergic receptor subfamily. ADRB3 sub-subfamily.</text>
</comment>
<accession>Q28524</accession>
<evidence type="ECO:0000250" key="1"/>
<evidence type="ECO:0000250" key="2">
    <source>
        <dbReference type="UniProtKB" id="P13945"/>
    </source>
</evidence>
<evidence type="ECO:0000255" key="3"/>
<evidence type="ECO:0000255" key="4">
    <source>
        <dbReference type="PROSITE-ProRule" id="PRU00521"/>
    </source>
</evidence>
<evidence type="ECO:0000256" key="5">
    <source>
        <dbReference type="SAM" id="MobiDB-lite"/>
    </source>
</evidence>
<name>ADRB3_MACMU</name>
<keyword id="KW-1003">Cell membrane</keyword>
<keyword id="KW-1015">Disulfide bond</keyword>
<keyword id="KW-0297">G-protein coupled receptor</keyword>
<keyword id="KW-0325">Glycoprotein</keyword>
<keyword id="KW-0449">Lipoprotein</keyword>
<keyword id="KW-0472">Membrane</keyword>
<keyword id="KW-0564">Palmitate</keyword>
<keyword id="KW-0675">Receptor</keyword>
<keyword id="KW-1185">Reference proteome</keyword>
<keyword id="KW-0807">Transducer</keyword>
<keyword id="KW-0812">Transmembrane</keyword>
<keyword id="KW-1133">Transmembrane helix</keyword>
<proteinExistence type="evidence at transcript level"/>
<reference key="1">
    <citation type="journal article" date="1997" name="Gene">
        <title>The beta3-adrenergic receptor in the obesity and diabetes prone rhesus monkey is very similar to human and contains arginine at codon 64.</title>
        <authorList>
            <person name="Walston J."/>
            <person name="Lowe A."/>
            <person name="Silver K."/>
            <person name="Yang Y."/>
            <person name="Bodkin N.L."/>
            <person name="Hansen B.C."/>
            <person name="Shuldiner A.R."/>
        </authorList>
    </citation>
    <scope>NUCLEOTIDE SEQUENCE [GENOMIC DNA]</scope>
</reference>
<reference key="2">
    <citation type="submission" date="1999-10" db="EMBL/GenBank/DDBJ databases">
        <authorList>
            <person name="Thompson G.M."/>
            <person name="Kelly L.J."/>
            <person name="Candelore M.R."/>
        </authorList>
    </citation>
    <scope>NUCLEOTIDE SEQUENCE [MRNA]</scope>
</reference>
<sequence>MAPWPHGNSSLVPWPDVPTLAPNTANTSGLPGVPWAAALAGALLALAVLATVGGNLLVIVAITRTPRLQTMTNVFVTSLAAADLVMGLLVVPPAATLVLTGHWPLGATGCELWTSVDVLCVTASIETLCALAVDRYLAVTNPLRYGALVTKRRARAAVVLVWVVSAAVSFAPIMSQWWRVGADAEAQRCHSNPRCCAFASNMPYVLLSSSVSFYLPLLVMLFVYARVFVVATRQLRLLRWELGRFPPEESSPALSRSLAPAPAGTCAPPEGVPACCRRPARLLPLREHRALCTLGLIMGTFTLCWLPFFLANVLRALGGPSLVPDPAFLALNWLGYANSAFNPLIYCRSPDFRSAFRRLLCHCGGRLPREPCAADRPASSPRAPLRPGPAPRSPGFASGSTGLLGEFLRPEGQEATLR</sequence>